<keyword id="KW-0285">Flavoprotein</keyword>
<keyword id="KW-0288">FMN</keyword>
<keyword id="KW-0560">Oxidoreductase</keyword>
<keyword id="KW-0664">Pyridoxine biosynthesis</keyword>
<organism>
    <name type="scientific">Pseudomonas aeruginosa (strain UCBPP-PA14)</name>
    <dbReference type="NCBI Taxonomy" id="208963"/>
    <lineage>
        <taxon>Bacteria</taxon>
        <taxon>Pseudomonadati</taxon>
        <taxon>Pseudomonadota</taxon>
        <taxon>Gammaproteobacteria</taxon>
        <taxon>Pseudomonadales</taxon>
        <taxon>Pseudomonadaceae</taxon>
        <taxon>Pseudomonas</taxon>
    </lineage>
</organism>
<name>PDXH_PSEAB</name>
<evidence type="ECO:0000255" key="1">
    <source>
        <dbReference type="HAMAP-Rule" id="MF_01629"/>
    </source>
</evidence>
<accession>Q02IL5</accession>
<protein>
    <recommendedName>
        <fullName evidence="1">Pyridoxine/pyridoxamine 5'-phosphate oxidase</fullName>
        <ecNumber evidence="1">1.4.3.5</ecNumber>
    </recommendedName>
    <alternativeName>
        <fullName evidence="1">PNP/PMP oxidase</fullName>
        <shortName evidence="1">PNPOx</shortName>
    </alternativeName>
    <alternativeName>
        <fullName evidence="1">Pyridoxal 5'-phosphate synthase</fullName>
    </alternativeName>
</protein>
<gene>
    <name evidence="1" type="primary">pdxH</name>
    <name type="ordered locus">PA14_50800</name>
</gene>
<feature type="chain" id="PRO_0000292316" description="Pyridoxine/pyridoxamine 5'-phosphate oxidase">
    <location>
        <begin position="1"/>
        <end position="215"/>
    </location>
</feature>
<feature type="binding site" evidence="1">
    <location>
        <begin position="9"/>
        <end position="12"/>
    </location>
    <ligand>
        <name>substrate</name>
    </ligand>
</feature>
<feature type="binding site" evidence="1">
    <location>
        <begin position="64"/>
        <end position="69"/>
    </location>
    <ligand>
        <name>FMN</name>
        <dbReference type="ChEBI" id="CHEBI:58210"/>
    </ligand>
</feature>
<feature type="binding site" evidence="1">
    <location>
        <position position="69"/>
    </location>
    <ligand>
        <name>substrate</name>
    </ligand>
</feature>
<feature type="binding site" evidence="1">
    <location>
        <begin position="79"/>
        <end position="80"/>
    </location>
    <ligand>
        <name>FMN</name>
        <dbReference type="ChEBI" id="CHEBI:58210"/>
    </ligand>
</feature>
<feature type="binding site" evidence="1">
    <location>
        <position position="86"/>
    </location>
    <ligand>
        <name>FMN</name>
        <dbReference type="ChEBI" id="CHEBI:58210"/>
    </ligand>
</feature>
<feature type="binding site" evidence="1">
    <location>
        <position position="108"/>
    </location>
    <ligand>
        <name>FMN</name>
        <dbReference type="ChEBI" id="CHEBI:58210"/>
    </ligand>
</feature>
<feature type="binding site" evidence="1">
    <location>
        <position position="126"/>
    </location>
    <ligand>
        <name>substrate</name>
    </ligand>
</feature>
<feature type="binding site" evidence="1">
    <location>
        <position position="130"/>
    </location>
    <ligand>
        <name>substrate</name>
    </ligand>
</feature>
<feature type="binding site" evidence="1">
    <location>
        <position position="134"/>
    </location>
    <ligand>
        <name>substrate</name>
    </ligand>
</feature>
<feature type="binding site" evidence="1">
    <location>
        <begin position="143"/>
        <end position="144"/>
    </location>
    <ligand>
        <name>FMN</name>
        <dbReference type="ChEBI" id="CHEBI:58210"/>
    </ligand>
</feature>
<feature type="binding site" evidence="1">
    <location>
        <position position="188"/>
    </location>
    <ligand>
        <name>FMN</name>
        <dbReference type="ChEBI" id="CHEBI:58210"/>
    </ligand>
</feature>
<feature type="binding site" evidence="1">
    <location>
        <begin position="194"/>
        <end position="196"/>
    </location>
    <ligand>
        <name>substrate</name>
    </ligand>
</feature>
<feature type="binding site" evidence="1">
    <location>
        <position position="198"/>
    </location>
    <ligand>
        <name>FMN</name>
        <dbReference type="ChEBI" id="CHEBI:58210"/>
    </ligand>
</feature>
<sequence length="215" mass="24834">MTQSLADMRREYTRDGLSEANAPSDPFSLFRQWFDDAVKTERLPVEPNAMTLATVDADGYPHCRILLLKGLDERGFTFFTNYESAKGRQLAANPRAAMTFFWPALERQVRIEGSVEKVTPEESDAYYQVRPLGSRLGAWASPQSRVIADRAELERLLADTERRFADQPPSCPEHWGGYRLLPQRIEFWQGRPSRLHDRLDYRRQDGGWSRERLAP</sequence>
<reference key="1">
    <citation type="journal article" date="2006" name="Genome Biol.">
        <title>Genomic analysis reveals that Pseudomonas aeruginosa virulence is combinatorial.</title>
        <authorList>
            <person name="Lee D.G."/>
            <person name="Urbach J.M."/>
            <person name="Wu G."/>
            <person name="Liberati N.T."/>
            <person name="Feinbaum R.L."/>
            <person name="Miyata S."/>
            <person name="Diggins L.T."/>
            <person name="He J."/>
            <person name="Saucier M."/>
            <person name="Deziel E."/>
            <person name="Friedman L."/>
            <person name="Li L."/>
            <person name="Grills G."/>
            <person name="Montgomery K."/>
            <person name="Kucherlapati R."/>
            <person name="Rahme L.G."/>
            <person name="Ausubel F.M."/>
        </authorList>
    </citation>
    <scope>NUCLEOTIDE SEQUENCE [LARGE SCALE GENOMIC DNA]</scope>
    <source>
        <strain>UCBPP-PA14</strain>
    </source>
</reference>
<comment type="function">
    <text evidence="1">Catalyzes the oxidation of either pyridoxine 5'-phosphate (PNP) or pyridoxamine 5'-phosphate (PMP) into pyridoxal 5'-phosphate (PLP).</text>
</comment>
<comment type="catalytic activity">
    <reaction evidence="1">
        <text>pyridoxamine 5'-phosphate + O2 + H2O = pyridoxal 5'-phosphate + H2O2 + NH4(+)</text>
        <dbReference type="Rhea" id="RHEA:15817"/>
        <dbReference type="ChEBI" id="CHEBI:15377"/>
        <dbReference type="ChEBI" id="CHEBI:15379"/>
        <dbReference type="ChEBI" id="CHEBI:16240"/>
        <dbReference type="ChEBI" id="CHEBI:28938"/>
        <dbReference type="ChEBI" id="CHEBI:58451"/>
        <dbReference type="ChEBI" id="CHEBI:597326"/>
        <dbReference type="EC" id="1.4.3.5"/>
    </reaction>
</comment>
<comment type="catalytic activity">
    <reaction evidence="1">
        <text>pyridoxine 5'-phosphate + O2 = pyridoxal 5'-phosphate + H2O2</text>
        <dbReference type="Rhea" id="RHEA:15149"/>
        <dbReference type="ChEBI" id="CHEBI:15379"/>
        <dbReference type="ChEBI" id="CHEBI:16240"/>
        <dbReference type="ChEBI" id="CHEBI:58589"/>
        <dbReference type="ChEBI" id="CHEBI:597326"/>
        <dbReference type="EC" id="1.4.3.5"/>
    </reaction>
</comment>
<comment type="cofactor">
    <cofactor evidence="1">
        <name>FMN</name>
        <dbReference type="ChEBI" id="CHEBI:58210"/>
    </cofactor>
    <text evidence="1">Binds 1 FMN per subunit.</text>
</comment>
<comment type="pathway">
    <text evidence="1">Cofactor metabolism; pyridoxal 5'-phosphate salvage; pyridoxal 5'-phosphate from pyridoxamine 5'-phosphate: step 1/1.</text>
</comment>
<comment type="pathway">
    <text evidence="1">Cofactor metabolism; pyridoxal 5'-phosphate salvage; pyridoxal 5'-phosphate from pyridoxine 5'-phosphate: step 1/1.</text>
</comment>
<comment type="subunit">
    <text evidence="1">Homodimer.</text>
</comment>
<comment type="similarity">
    <text evidence="1">Belongs to the pyridoxamine 5'-phosphate oxidase family.</text>
</comment>
<dbReference type="EC" id="1.4.3.5" evidence="1"/>
<dbReference type="EMBL" id="CP000438">
    <property type="protein sequence ID" value="ABJ10213.1"/>
    <property type="molecule type" value="Genomic_DNA"/>
</dbReference>
<dbReference type="RefSeq" id="WP_003086357.1">
    <property type="nucleotide sequence ID" value="NZ_CP034244.1"/>
</dbReference>
<dbReference type="SMR" id="Q02IL5"/>
<dbReference type="KEGG" id="pau:PA14_50800"/>
<dbReference type="PseudoCAP" id="PA14_50800"/>
<dbReference type="HOGENOM" id="CLU_032263_2_2_6"/>
<dbReference type="BioCyc" id="PAER208963:G1G74-4267-MONOMER"/>
<dbReference type="UniPathway" id="UPA01068">
    <property type="reaction ID" value="UER00304"/>
</dbReference>
<dbReference type="UniPathway" id="UPA01068">
    <property type="reaction ID" value="UER00305"/>
</dbReference>
<dbReference type="Proteomes" id="UP000000653">
    <property type="component" value="Chromosome"/>
</dbReference>
<dbReference type="GO" id="GO:0010181">
    <property type="term" value="F:FMN binding"/>
    <property type="evidence" value="ECO:0007669"/>
    <property type="project" value="UniProtKB-UniRule"/>
</dbReference>
<dbReference type="GO" id="GO:0004733">
    <property type="term" value="F:pyridoxamine phosphate oxidase activity"/>
    <property type="evidence" value="ECO:0007669"/>
    <property type="project" value="UniProtKB-UniRule"/>
</dbReference>
<dbReference type="GO" id="GO:0008615">
    <property type="term" value="P:pyridoxine biosynthetic process"/>
    <property type="evidence" value="ECO:0007669"/>
    <property type="project" value="UniProtKB-KW"/>
</dbReference>
<dbReference type="FunFam" id="2.30.110.10:FF:000011">
    <property type="entry name" value="Chromosome 7, whole genome shotgun sequence"/>
    <property type="match status" value="1"/>
</dbReference>
<dbReference type="Gene3D" id="2.30.110.10">
    <property type="entry name" value="Electron Transport, Fmn-binding Protein, Chain A"/>
    <property type="match status" value="1"/>
</dbReference>
<dbReference type="HAMAP" id="MF_01629">
    <property type="entry name" value="PdxH"/>
    <property type="match status" value="1"/>
</dbReference>
<dbReference type="InterPro" id="IPR000659">
    <property type="entry name" value="Pyridox_Oxase"/>
</dbReference>
<dbReference type="InterPro" id="IPR019740">
    <property type="entry name" value="Pyridox_Oxase_CS"/>
</dbReference>
<dbReference type="InterPro" id="IPR011576">
    <property type="entry name" value="Pyridox_Oxase_N"/>
</dbReference>
<dbReference type="InterPro" id="IPR019576">
    <property type="entry name" value="Pyridoxamine_oxidase_dimer_C"/>
</dbReference>
<dbReference type="InterPro" id="IPR012349">
    <property type="entry name" value="Split_barrel_FMN-bd"/>
</dbReference>
<dbReference type="NCBIfam" id="TIGR00558">
    <property type="entry name" value="pdxH"/>
    <property type="match status" value="1"/>
</dbReference>
<dbReference type="NCBIfam" id="NF004231">
    <property type="entry name" value="PRK05679.1"/>
    <property type="match status" value="1"/>
</dbReference>
<dbReference type="PANTHER" id="PTHR10851:SF0">
    <property type="entry name" value="PYRIDOXINE-5'-PHOSPHATE OXIDASE"/>
    <property type="match status" value="1"/>
</dbReference>
<dbReference type="PANTHER" id="PTHR10851">
    <property type="entry name" value="PYRIDOXINE-5-PHOSPHATE OXIDASE"/>
    <property type="match status" value="1"/>
</dbReference>
<dbReference type="Pfam" id="PF10590">
    <property type="entry name" value="PNP_phzG_C"/>
    <property type="match status" value="1"/>
</dbReference>
<dbReference type="Pfam" id="PF01243">
    <property type="entry name" value="PNPOx_N"/>
    <property type="match status" value="1"/>
</dbReference>
<dbReference type="PIRSF" id="PIRSF000190">
    <property type="entry name" value="Pyd_amn-ph_oxd"/>
    <property type="match status" value="1"/>
</dbReference>
<dbReference type="SUPFAM" id="SSF50475">
    <property type="entry name" value="FMN-binding split barrel"/>
    <property type="match status" value="1"/>
</dbReference>
<dbReference type="PROSITE" id="PS01064">
    <property type="entry name" value="PYRIDOX_OXIDASE"/>
    <property type="match status" value="1"/>
</dbReference>
<proteinExistence type="inferred from homology"/>